<dbReference type="EC" id="7.6.2.5" evidence="1"/>
<dbReference type="EMBL" id="AP008229">
    <property type="protein sequence ID" value="BAE68779.1"/>
    <property type="molecule type" value="Genomic_DNA"/>
</dbReference>
<dbReference type="RefSeq" id="WP_011408428.1">
    <property type="nucleotide sequence ID" value="NC_007705.1"/>
</dbReference>
<dbReference type="SMR" id="Q2P3U8"/>
<dbReference type="KEGG" id="xom:XOO2024"/>
<dbReference type="HOGENOM" id="CLU_000604_1_2_6"/>
<dbReference type="GO" id="GO:0005886">
    <property type="term" value="C:plasma membrane"/>
    <property type="evidence" value="ECO:0007669"/>
    <property type="project" value="UniProtKB-SubCell"/>
</dbReference>
<dbReference type="GO" id="GO:0015439">
    <property type="term" value="F:ABC-type heme transporter activity"/>
    <property type="evidence" value="ECO:0007669"/>
    <property type="project" value="UniProtKB-EC"/>
</dbReference>
<dbReference type="GO" id="GO:0005524">
    <property type="term" value="F:ATP binding"/>
    <property type="evidence" value="ECO:0007669"/>
    <property type="project" value="UniProtKB-KW"/>
</dbReference>
<dbReference type="GO" id="GO:0016887">
    <property type="term" value="F:ATP hydrolysis activity"/>
    <property type="evidence" value="ECO:0007669"/>
    <property type="project" value="InterPro"/>
</dbReference>
<dbReference type="GO" id="GO:0017004">
    <property type="term" value="P:cytochrome complex assembly"/>
    <property type="evidence" value="ECO:0007669"/>
    <property type="project" value="UniProtKB-KW"/>
</dbReference>
<dbReference type="Gene3D" id="3.40.50.300">
    <property type="entry name" value="P-loop containing nucleotide triphosphate hydrolases"/>
    <property type="match status" value="1"/>
</dbReference>
<dbReference type="InterPro" id="IPR003593">
    <property type="entry name" value="AAA+_ATPase"/>
</dbReference>
<dbReference type="InterPro" id="IPR003439">
    <property type="entry name" value="ABC_transporter-like_ATP-bd"/>
</dbReference>
<dbReference type="InterPro" id="IPR017871">
    <property type="entry name" value="ABC_transporter-like_CS"/>
</dbReference>
<dbReference type="InterPro" id="IPR005895">
    <property type="entry name" value="ABC_transptr_haem_export_CcmA"/>
</dbReference>
<dbReference type="InterPro" id="IPR027417">
    <property type="entry name" value="P-loop_NTPase"/>
</dbReference>
<dbReference type="NCBIfam" id="TIGR01189">
    <property type="entry name" value="ccmA"/>
    <property type="match status" value="1"/>
</dbReference>
<dbReference type="NCBIfam" id="NF010061">
    <property type="entry name" value="PRK13538.1"/>
    <property type="match status" value="1"/>
</dbReference>
<dbReference type="PANTHER" id="PTHR43499">
    <property type="entry name" value="ABC TRANSPORTER I FAMILY MEMBER 1"/>
    <property type="match status" value="1"/>
</dbReference>
<dbReference type="PANTHER" id="PTHR43499:SF1">
    <property type="entry name" value="ABC TRANSPORTER I FAMILY MEMBER 1"/>
    <property type="match status" value="1"/>
</dbReference>
<dbReference type="Pfam" id="PF00005">
    <property type="entry name" value="ABC_tran"/>
    <property type="match status" value="1"/>
</dbReference>
<dbReference type="SMART" id="SM00382">
    <property type="entry name" value="AAA"/>
    <property type="match status" value="1"/>
</dbReference>
<dbReference type="SUPFAM" id="SSF52540">
    <property type="entry name" value="P-loop containing nucleoside triphosphate hydrolases"/>
    <property type="match status" value="1"/>
</dbReference>
<dbReference type="PROSITE" id="PS00211">
    <property type="entry name" value="ABC_TRANSPORTER_1"/>
    <property type="match status" value="1"/>
</dbReference>
<dbReference type="PROSITE" id="PS50893">
    <property type="entry name" value="ABC_TRANSPORTER_2"/>
    <property type="match status" value="1"/>
</dbReference>
<dbReference type="PROSITE" id="PS51243">
    <property type="entry name" value="CCMA"/>
    <property type="match status" value="1"/>
</dbReference>
<comment type="function">
    <text evidence="1">Part of the ABC transporter complex CcmAB involved in the biogenesis of c-type cytochromes; once thought to export heme, this seems not to be the case, but its exact role is uncertain. Responsible for energy coupling to the transport system.</text>
</comment>
<comment type="catalytic activity">
    <reaction evidence="1">
        <text>heme b(in) + ATP + H2O = heme b(out) + ADP + phosphate + H(+)</text>
        <dbReference type="Rhea" id="RHEA:19261"/>
        <dbReference type="ChEBI" id="CHEBI:15377"/>
        <dbReference type="ChEBI" id="CHEBI:15378"/>
        <dbReference type="ChEBI" id="CHEBI:30616"/>
        <dbReference type="ChEBI" id="CHEBI:43474"/>
        <dbReference type="ChEBI" id="CHEBI:60344"/>
        <dbReference type="ChEBI" id="CHEBI:456216"/>
        <dbReference type="EC" id="7.6.2.5"/>
    </reaction>
</comment>
<comment type="subunit">
    <text evidence="1">The complex is composed of two ATP-binding proteins (CcmA) and two transmembrane proteins (CcmB).</text>
</comment>
<comment type="subcellular location">
    <subcellularLocation>
        <location evidence="1">Cell inner membrane</location>
        <topology evidence="1">Peripheral membrane protein</topology>
    </subcellularLocation>
</comment>
<comment type="similarity">
    <text evidence="1">Belongs to the ABC transporter superfamily. CcmA exporter (TC 3.A.1.107) family.</text>
</comment>
<name>CCMA_XANOM</name>
<organism>
    <name type="scientific">Xanthomonas oryzae pv. oryzae (strain MAFF 311018)</name>
    <dbReference type="NCBI Taxonomy" id="342109"/>
    <lineage>
        <taxon>Bacteria</taxon>
        <taxon>Pseudomonadati</taxon>
        <taxon>Pseudomonadota</taxon>
        <taxon>Gammaproteobacteria</taxon>
        <taxon>Lysobacterales</taxon>
        <taxon>Lysobacteraceae</taxon>
        <taxon>Xanthomonas</taxon>
    </lineage>
</organism>
<sequence>MIEPLHTAPPLLAAHALAFSRNEEPVFGPLDFHVDAGEALLVQGDNGAGKTTLLRVLAGLLHVEHGQIQIDGKTAKRGDRSRFMAYLGHLPGLKADLSTLENLHFLCGLHGRRAKQMPGSALAIVGLAGYEDALVRQLSAGQRKRLALARLWLSPAPLWLLDEPYANLDLDGITLVNRMISAHLRGGGAALVTTHGAYAAPPVRTRMLTLEAAA</sequence>
<protein>
    <recommendedName>
        <fullName evidence="1">Cytochrome c biogenesis ATP-binding export protein CcmA</fullName>
        <ecNumber evidence="1">7.6.2.5</ecNumber>
    </recommendedName>
    <alternativeName>
        <fullName evidence="1">Heme exporter protein A</fullName>
    </alternativeName>
</protein>
<accession>Q2P3U8</accession>
<proteinExistence type="inferred from homology"/>
<reference key="1">
    <citation type="journal article" date="2005" name="Jpn. Agric. Res. Q.">
        <title>Genome sequence of Xanthomonas oryzae pv. oryzae suggests contribution of large numbers of effector genes and insertion sequences to its race diversity.</title>
        <authorList>
            <person name="Ochiai H."/>
            <person name="Inoue Y."/>
            <person name="Takeya M."/>
            <person name="Sasaki A."/>
            <person name="Kaku H."/>
        </authorList>
    </citation>
    <scope>NUCLEOTIDE SEQUENCE [LARGE SCALE GENOMIC DNA]</scope>
    <source>
        <strain>MAFF 311018</strain>
    </source>
</reference>
<evidence type="ECO:0000255" key="1">
    <source>
        <dbReference type="HAMAP-Rule" id="MF_01707"/>
    </source>
</evidence>
<keyword id="KW-0067">ATP-binding</keyword>
<keyword id="KW-0997">Cell inner membrane</keyword>
<keyword id="KW-1003">Cell membrane</keyword>
<keyword id="KW-0201">Cytochrome c-type biogenesis</keyword>
<keyword id="KW-0472">Membrane</keyword>
<keyword id="KW-0547">Nucleotide-binding</keyword>
<keyword id="KW-1278">Translocase</keyword>
<keyword id="KW-0813">Transport</keyword>
<gene>
    <name evidence="1" type="primary">ccmA</name>
    <name type="ordered locus">XOO2024</name>
</gene>
<feature type="chain" id="PRO_0000271969" description="Cytochrome c biogenesis ATP-binding export protein CcmA">
    <location>
        <begin position="1"/>
        <end position="214"/>
    </location>
</feature>
<feature type="domain" description="ABC transporter" evidence="1">
    <location>
        <begin position="12"/>
        <end position="214"/>
    </location>
</feature>
<feature type="binding site" evidence="1">
    <location>
        <begin position="44"/>
        <end position="51"/>
    </location>
    <ligand>
        <name>ATP</name>
        <dbReference type="ChEBI" id="CHEBI:30616"/>
    </ligand>
</feature>